<sequence>MASPSGQYIFGEFSDDEFKQFFVTARCTVELPPYNEHFFPCGPQSSGDFQDDMHLKFSEVIHGISGEDCPRIEFGIEEVIDHSTALPNNTDYSISSNLNPQAPEFILTCSSSPKTSNNVLHENNFDAINCQFSECAIPDGSGNADSDGTSGTGQRERKKKKKRPPGYYSYLEGVGDVPSETLVNGHANSTGLNSISTDDPDLAEDIPISTTSPRTCNSPDNFVDLNNEALSNDASMHNALDNARTAGQPEECSVTSSEQSCIPSDNGRESPVRTAVVQPFAGTDTTENLGVTNGQTLESSEEGTASNGVVLLPEVSSLSEEAKPEETSTAQAVVHLPGSASANPPAKSWASLFHNSKPSSTTQVAYVETKNATPVTSPQVTEKQVEIKEGPVPVSEDPVAIKIAELLEEVKLVHKPVSLQPRGLINKGNWCYINATLQALVACPPMYHLMKSIPVYTKAQRPCTSTPMIDSFVRLMNEFTNMPILPKAKQASGEKVIRDIRPGAPFEPAYIYRLLTVFKSSLSEKGRQEDAEEYLGFILNGLHEEMLSLKKLLLPQNDKIHINNGPDPVSEKEEINKDEQEGSDEEWEQVGPRHKSSVTRQADFVQTPITDIFGGHMRSVVYQQSSKESATLQPFFTLQLDIQSEKIRTVQDALESLVARESVQGYTTKTKQEVEICRRVTLEELPPVLVLHLKRFVFEKTGGCQKLIKNIEYPVDLEISKDLLSPGVKSKIFKGQRTYRLFAVVYHHGNSATGGHYTTDVFQIGLNGWLRIDDQTVKVINQYQVVKQTVERTAYLLYYRRVDLL</sequence>
<gene>
    <name type="primary">usp10</name>
    <name type="ORF">TGas137m11.1</name>
</gene>
<evidence type="ECO:0000250" key="1">
    <source>
        <dbReference type="UniProtKB" id="Q14694"/>
    </source>
</evidence>
<evidence type="ECO:0000255" key="2">
    <source>
        <dbReference type="PROSITE-ProRule" id="PRU10092"/>
    </source>
</evidence>
<evidence type="ECO:0000255" key="3">
    <source>
        <dbReference type="PROSITE-ProRule" id="PRU10093"/>
    </source>
</evidence>
<evidence type="ECO:0000256" key="4">
    <source>
        <dbReference type="SAM" id="MobiDB-lite"/>
    </source>
</evidence>
<evidence type="ECO:0000305" key="5"/>
<dbReference type="EC" id="3.4.19.12" evidence="1"/>
<dbReference type="EMBL" id="CR855702">
    <property type="protein sequence ID" value="CAJ83514.1"/>
    <property type="molecule type" value="mRNA"/>
</dbReference>
<dbReference type="EMBL" id="BC075544">
    <property type="protein sequence ID" value="AAH75544.1"/>
    <property type="molecule type" value="mRNA"/>
</dbReference>
<dbReference type="RefSeq" id="NP_001006761.1">
    <property type="nucleotide sequence ID" value="NM_001006760.1"/>
</dbReference>
<dbReference type="SMR" id="Q6DIJ4"/>
<dbReference type="FunCoup" id="Q6DIJ4">
    <property type="interactions" value="2582"/>
</dbReference>
<dbReference type="STRING" id="8364.ENSXETP00000016806"/>
<dbReference type="MEROPS" id="C19.018"/>
<dbReference type="DNASU" id="448441"/>
<dbReference type="GeneID" id="448441"/>
<dbReference type="KEGG" id="xtr:448441"/>
<dbReference type="AGR" id="Xenbase:XB-GENE-966184"/>
<dbReference type="CTD" id="9100"/>
<dbReference type="Xenbase" id="XB-GENE-966184">
    <property type="gene designation" value="usp10"/>
</dbReference>
<dbReference type="InParanoid" id="Q6DIJ4"/>
<dbReference type="OMA" id="RTCGSPQ"/>
<dbReference type="OrthoDB" id="429671at2759"/>
<dbReference type="Reactome" id="R-XTR-5656169">
    <property type="pathway name" value="Termination of translesion DNA synthesis"/>
</dbReference>
<dbReference type="Reactome" id="R-XTR-5689880">
    <property type="pathway name" value="Ub-specific processing proteases"/>
</dbReference>
<dbReference type="Proteomes" id="UP000008143">
    <property type="component" value="Chromosome 4"/>
</dbReference>
<dbReference type="GO" id="GO:0005737">
    <property type="term" value="C:cytoplasm"/>
    <property type="evidence" value="ECO:0000250"/>
    <property type="project" value="UniProtKB"/>
</dbReference>
<dbReference type="GO" id="GO:0005769">
    <property type="term" value="C:early endosome"/>
    <property type="evidence" value="ECO:0000250"/>
    <property type="project" value="UniProtKB"/>
</dbReference>
<dbReference type="GO" id="GO:0005634">
    <property type="term" value="C:nucleus"/>
    <property type="evidence" value="ECO:0000250"/>
    <property type="project" value="UniProtKB"/>
</dbReference>
<dbReference type="GO" id="GO:0004843">
    <property type="term" value="F:cysteine-type deubiquitinase activity"/>
    <property type="evidence" value="ECO:0000250"/>
    <property type="project" value="UniProtKB"/>
</dbReference>
<dbReference type="GO" id="GO:0004197">
    <property type="term" value="F:cysteine-type endopeptidase activity"/>
    <property type="evidence" value="ECO:0000250"/>
    <property type="project" value="UniProtKB"/>
</dbReference>
<dbReference type="GO" id="GO:0002039">
    <property type="term" value="F:p53 binding"/>
    <property type="evidence" value="ECO:0000250"/>
    <property type="project" value="UniProtKB"/>
</dbReference>
<dbReference type="GO" id="GO:0044325">
    <property type="term" value="F:transmembrane transporter binding"/>
    <property type="evidence" value="ECO:0000250"/>
    <property type="project" value="UniProtKB"/>
</dbReference>
<dbReference type="GO" id="GO:0006914">
    <property type="term" value="P:autophagy"/>
    <property type="evidence" value="ECO:0007669"/>
    <property type="project" value="UniProtKB-KW"/>
</dbReference>
<dbReference type="GO" id="GO:0071347">
    <property type="term" value="P:cellular response to interleukin-1"/>
    <property type="evidence" value="ECO:0000250"/>
    <property type="project" value="UniProtKB"/>
</dbReference>
<dbReference type="GO" id="GO:0006974">
    <property type="term" value="P:DNA damage response"/>
    <property type="evidence" value="ECO:0000250"/>
    <property type="project" value="UniProtKB"/>
</dbReference>
<dbReference type="GO" id="GO:0030330">
    <property type="term" value="P:DNA damage response, signal transduction by p53 class mediator"/>
    <property type="evidence" value="ECO:0000250"/>
    <property type="project" value="UniProtKB"/>
</dbReference>
<dbReference type="GO" id="GO:0006281">
    <property type="term" value="P:DNA repair"/>
    <property type="evidence" value="ECO:0007669"/>
    <property type="project" value="UniProtKB-KW"/>
</dbReference>
<dbReference type="GO" id="GO:0043124">
    <property type="term" value="P:negative regulation of canonical NF-kappaB signal transduction"/>
    <property type="evidence" value="ECO:0000250"/>
    <property type="project" value="UniProtKB"/>
</dbReference>
<dbReference type="GO" id="GO:0062030">
    <property type="term" value="P:negative regulation of stress granule assembly"/>
    <property type="evidence" value="ECO:0000250"/>
    <property type="project" value="UniProtKB"/>
</dbReference>
<dbReference type="GO" id="GO:0016579">
    <property type="term" value="P:protein deubiquitination"/>
    <property type="evidence" value="ECO:0000250"/>
    <property type="project" value="UniProtKB"/>
</dbReference>
<dbReference type="GO" id="GO:0006508">
    <property type="term" value="P:proteolysis"/>
    <property type="evidence" value="ECO:0007669"/>
    <property type="project" value="UniProtKB-KW"/>
</dbReference>
<dbReference type="GO" id="GO:0010506">
    <property type="term" value="P:regulation of autophagy"/>
    <property type="evidence" value="ECO:0000250"/>
    <property type="project" value="UniProtKB"/>
</dbReference>
<dbReference type="GO" id="GO:0072344">
    <property type="term" value="P:rescue of stalled ribosome"/>
    <property type="evidence" value="ECO:0000250"/>
    <property type="project" value="UniProtKB"/>
</dbReference>
<dbReference type="CDD" id="cd02257">
    <property type="entry name" value="Peptidase_C19"/>
    <property type="match status" value="1"/>
</dbReference>
<dbReference type="FunFam" id="3.90.70.10:FF:000015">
    <property type="entry name" value="Ubiquitin specific peptidase 10"/>
    <property type="match status" value="1"/>
</dbReference>
<dbReference type="Gene3D" id="3.90.70.10">
    <property type="entry name" value="Cysteine proteinases"/>
    <property type="match status" value="1"/>
</dbReference>
<dbReference type="InterPro" id="IPR038765">
    <property type="entry name" value="Papain-like_cys_pep_sf"/>
</dbReference>
<dbReference type="InterPro" id="IPR050164">
    <property type="entry name" value="Peptidase_C19"/>
</dbReference>
<dbReference type="InterPro" id="IPR001394">
    <property type="entry name" value="Peptidase_C19_UCH"/>
</dbReference>
<dbReference type="InterPro" id="IPR018200">
    <property type="entry name" value="USP_CS"/>
</dbReference>
<dbReference type="InterPro" id="IPR028889">
    <property type="entry name" value="USP_dom"/>
</dbReference>
<dbReference type="PANTHER" id="PTHR24006">
    <property type="entry name" value="UBIQUITIN CARBOXYL-TERMINAL HYDROLASE"/>
    <property type="match status" value="1"/>
</dbReference>
<dbReference type="PANTHER" id="PTHR24006:SF687">
    <property type="entry name" value="UBIQUITIN CARBOXYL-TERMINAL HYDROLASE 10"/>
    <property type="match status" value="1"/>
</dbReference>
<dbReference type="Pfam" id="PF00443">
    <property type="entry name" value="UCH"/>
    <property type="match status" value="1"/>
</dbReference>
<dbReference type="SUPFAM" id="SSF54001">
    <property type="entry name" value="Cysteine proteinases"/>
    <property type="match status" value="1"/>
</dbReference>
<dbReference type="PROSITE" id="PS00972">
    <property type="entry name" value="USP_1"/>
    <property type="match status" value="1"/>
</dbReference>
<dbReference type="PROSITE" id="PS00973">
    <property type="entry name" value="USP_2"/>
    <property type="match status" value="1"/>
</dbReference>
<dbReference type="PROSITE" id="PS50235">
    <property type="entry name" value="USP_3"/>
    <property type="match status" value="1"/>
</dbReference>
<accession>Q6DIJ4</accession>
<reference key="1">
    <citation type="submission" date="2006-10" db="EMBL/GenBank/DDBJ databases">
        <authorList>
            <consortium name="Sanger Xenopus tropicalis EST/cDNA project"/>
        </authorList>
    </citation>
    <scope>NUCLEOTIDE SEQUENCE [LARGE SCALE MRNA]</scope>
    <source>
        <tissue>Gastrula</tissue>
    </source>
</reference>
<reference key="2">
    <citation type="submission" date="2004-06" db="EMBL/GenBank/DDBJ databases">
        <authorList>
            <consortium name="NIH - Xenopus Gene Collection (XGC) project"/>
        </authorList>
    </citation>
    <scope>NUCLEOTIDE SEQUENCE [LARGE SCALE MRNA]</scope>
    <source>
        <tissue>Embryo</tissue>
    </source>
</reference>
<name>UBP10_XENTR</name>
<protein>
    <recommendedName>
        <fullName>Ubiquitin carboxyl-terminal hydrolase 10</fullName>
        <ecNumber evidence="1">3.4.19.12</ecNumber>
    </recommendedName>
    <alternativeName>
        <fullName>Deubiquitinating enzyme 10</fullName>
    </alternativeName>
    <alternativeName>
        <fullName>Ubiquitin thioesterase 10</fullName>
    </alternativeName>
    <alternativeName>
        <fullName>Ubiquitin-specific-processing protease 10</fullName>
    </alternativeName>
</protein>
<feature type="chain" id="PRO_0000393004" description="Ubiquitin carboxyl-terminal hydrolase 10">
    <location>
        <begin position="1"/>
        <end position="805"/>
    </location>
</feature>
<feature type="domain" description="USP">
    <location>
        <begin position="422"/>
        <end position="802"/>
    </location>
</feature>
<feature type="region of interest" description="Disordered" evidence="4">
    <location>
        <begin position="139"/>
        <end position="170"/>
    </location>
</feature>
<feature type="region of interest" description="Disordered" evidence="4">
    <location>
        <begin position="561"/>
        <end position="593"/>
    </location>
</feature>
<feature type="compositionally biased region" description="Polar residues" evidence="4">
    <location>
        <begin position="143"/>
        <end position="153"/>
    </location>
</feature>
<feature type="compositionally biased region" description="Basic and acidic residues" evidence="4">
    <location>
        <begin position="569"/>
        <end position="580"/>
    </location>
</feature>
<feature type="active site" description="Nucleophile" evidence="2 3">
    <location>
        <position position="431"/>
    </location>
</feature>
<feature type="active site" description="Proton acceptor" evidence="2 3">
    <location>
        <position position="756"/>
    </location>
</feature>
<proteinExistence type="evidence at transcript level"/>
<comment type="function">
    <text evidence="1">Hydrolase that can remove conjugated ubiquitin from target proteins such as p53/tp53, rps2/us5, rps3/us3, rps10/eS10, becn1, snx3 and cftr. Acts as an essential regulator of p53/tp53 stability: in unstressed cells, specifically deubiquitinates p53/tp53 in the cytoplasm, leading to counteracts MDM2 action and stabilize p53/tp53. Following DNA damage, translocates to the nucleus and deubiquitinates p53/tp53, leading to regulate the p53/TP53-dependent DNA damage response. Component of a regulatory loop that controls autophagy and p53/tp53 levels. Plays a key role in 40S ribosome subunit recycling when a ribosome has stalled during translation: acts both by inhibiting formation of stress granules, which store stalled translation pre-initiation complexes, and mediating deubiquitination of 40S ribosome subunits. Deubiquitinates cftr in early endosomes, enhancing its endocytic recycling.</text>
</comment>
<comment type="catalytic activity">
    <reaction evidence="1">
        <text>Thiol-dependent hydrolysis of ester, thioester, amide, peptide and isopeptide bonds formed by the C-terminal Gly of ubiquitin (a 76-residue protein attached to proteins as an intracellular targeting signal).</text>
        <dbReference type="EC" id="3.4.19.12"/>
    </reaction>
</comment>
<comment type="subcellular location">
    <subcellularLocation>
        <location evidence="1">Cytoplasm</location>
    </subcellularLocation>
    <subcellularLocation>
        <location evidence="1">Nucleus</location>
    </subcellularLocation>
</comment>
<comment type="similarity">
    <text evidence="5">Belongs to the peptidase C19 family. USP10 subfamily.</text>
</comment>
<keyword id="KW-0072">Autophagy</keyword>
<keyword id="KW-0963">Cytoplasm</keyword>
<keyword id="KW-0227">DNA damage</keyword>
<keyword id="KW-0234">DNA repair</keyword>
<keyword id="KW-0378">Hydrolase</keyword>
<keyword id="KW-0539">Nucleus</keyword>
<keyword id="KW-0645">Protease</keyword>
<keyword id="KW-1185">Reference proteome</keyword>
<keyword id="KW-0788">Thiol protease</keyword>
<keyword id="KW-0833">Ubl conjugation pathway</keyword>
<organism>
    <name type="scientific">Xenopus tropicalis</name>
    <name type="common">Western clawed frog</name>
    <name type="synonym">Silurana tropicalis</name>
    <dbReference type="NCBI Taxonomy" id="8364"/>
    <lineage>
        <taxon>Eukaryota</taxon>
        <taxon>Metazoa</taxon>
        <taxon>Chordata</taxon>
        <taxon>Craniata</taxon>
        <taxon>Vertebrata</taxon>
        <taxon>Euteleostomi</taxon>
        <taxon>Amphibia</taxon>
        <taxon>Batrachia</taxon>
        <taxon>Anura</taxon>
        <taxon>Pipoidea</taxon>
        <taxon>Pipidae</taxon>
        <taxon>Xenopodinae</taxon>
        <taxon>Xenopus</taxon>
        <taxon>Silurana</taxon>
    </lineage>
</organism>